<evidence type="ECO:0000255" key="1">
    <source>
        <dbReference type="HAMAP-Rule" id="MF_01062"/>
    </source>
</evidence>
<dbReference type="EC" id="2.7.11.33" evidence="1"/>
<dbReference type="EC" id="2.7.4.28" evidence="1"/>
<dbReference type="EMBL" id="CP000513">
    <property type="protein sequence ID" value="ABQ13192.1"/>
    <property type="molecule type" value="Genomic_DNA"/>
</dbReference>
<dbReference type="RefSeq" id="WP_012030962.1">
    <property type="nucleotide sequence ID" value="NC_009446.1"/>
</dbReference>
<dbReference type="SMR" id="A5EVB6"/>
<dbReference type="STRING" id="246195.DNO_0628"/>
<dbReference type="KEGG" id="dno:DNO_0628"/>
<dbReference type="eggNOG" id="COG1806">
    <property type="taxonomic scope" value="Bacteria"/>
</dbReference>
<dbReference type="HOGENOM" id="CLU_046206_1_0_6"/>
<dbReference type="OrthoDB" id="9782201at2"/>
<dbReference type="Proteomes" id="UP000000248">
    <property type="component" value="Chromosome"/>
</dbReference>
<dbReference type="GO" id="GO:0043531">
    <property type="term" value="F:ADP binding"/>
    <property type="evidence" value="ECO:0007669"/>
    <property type="project" value="UniProtKB-UniRule"/>
</dbReference>
<dbReference type="GO" id="GO:0005524">
    <property type="term" value="F:ATP binding"/>
    <property type="evidence" value="ECO:0007669"/>
    <property type="project" value="InterPro"/>
</dbReference>
<dbReference type="GO" id="GO:0016776">
    <property type="term" value="F:phosphotransferase activity, phosphate group as acceptor"/>
    <property type="evidence" value="ECO:0007669"/>
    <property type="project" value="UniProtKB-UniRule"/>
</dbReference>
<dbReference type="GO" id="GO:0004674">
    <property type="term" value="F:protein serine/threonine kinase activity"/>
    <property type="evidence" value="ECO:0007669"/>
    <property type="project" value="UniProtKB-UniRule"/>
</dbReference>
<dbReference type="HAMAP" id="MF_01062">
    <property type="entry name" value="PSRP"/>
    <property type="match status" value="1"/>
</dbReference>
<dbReference type="InterPro" id="IPR005177">
    <property type="entry name" value="Kinase-pyrophosphorylase"/>
</dbReference>
<dbReference type="InterPro" id="IPR026530">
    <property type="entry name" value="PSRP"/>
</dbReference>
<dbReference type="NCBIfam" id="NF003742">
    <property type="entry name" value="PRK05339.1"/>
    <property type="match status" value="1"/>
</dbReference>
<dbReference type="PANTHER" id="PTHR31756">
    <property type="entry name" value="PYRUVATE, PHOSPHATE DIKINASE REGULATORY PROTEIN 1, CHLOROPLASTIC"/>
    <property type="match status" value="1"/>
</dbReference>
<dbReference type="PANTHER" id="PTHR31756:SF3">
    <property type="entry name" value="PYRUVATE, PHOSPHATE DIKINASE REGULATORY PROTEIN 1, CHLOROPLASTIC"/>
    <property type="match status" value="1"/>
</dbReference>
<dbReference type="Pfam" id="PF03618">
    <property type="entry name" value="Kinase-PPPase"/>
    <property type="match status" value="1"/>
</dbReference>
<protein>
    <recommendedName>
        <fullName evidence="1">Putative phosphoenolpyruvate synthase regulatory protein</fullName>
        <shortName evidence="1">PEP synthase regulatory protein</shortName>
        <shortName evidence="1">PSRP</shortName>
        <ecNumber evidence="1">2.7.11.33</ecNumber>
        <ecNumber evidence="1">2.7.4.28</ecNumber>
    </recommendedName>
    <alternativeName>
        <fullName evidence="1">Pyruvate, water dikinase regulatory protein</fullName>
    </alternativeName>
</protein>
<reference key="1">
    <citation type="journal article" date="2007" name="Nat. Biotechnol.">
        <title>Genome sequence and identification of candidate vaccine antigens from the animal pathogen Dichelobacter nodosus.</title>
        <authorList>
            <person name="Myers G.S.A."/>
            <person name="Parker D."/>
            <person name="Al-Hasani K."/>
            <person name="Kennan R.M."/>
            <person name="Seemann T."/>
            <person name="Ren Q."/>
            <person name="Badger J.H."/>
            <person name="Selengut J.D."/>
            <person name="Deboy R.T."/>
            <person name="Tettelin H."/>
            <person name="Boyce J.D."/>
            <person name="McCarl V.P."/>
            <person name="Han X."/>
            <person name="Nelson W.C."/>
            <person name="Madupu R."/>
            <person name="Mohamoud Y."/>
            <person name="Holley T."/>
            <person name="Fedorova N."/>
            <person name="Khouri H."/>
            <person name="Bottomley S.P."/>
            <person name="Whittington R.J."/>
            <person name="Adler B."/>
            <person name="Songer J.G."/>
            <person name="Rood J.I."/>
            <person name="Paulsen I.T."/>
        </authorList>
    </citation>
    <scope>NUCLEOTIDE SEQUENCE [LARGE SCALE GENOMIC DNA]</scope>
    <source>
        <strain>VCS1703A</strain>
    </source>
</reference>
<organism>
    <name type="scientific">Dichelobacter nodosus (strain VCS1703A)</name>
    <dbReference type="NCBI Taxonomy" id="246195"/>
    <lineage>
        <taxon>Bacteria</taxon>
        <taxon>Pseudomonadati</taxon>
        <taxon>Pseudomonadota</taxon>
        <taxon>Gammaproteobacteria</taxon>
        <taxon>Cardiobacteriales</taxon>
        <taxon>Cardiobacteriaceae</taxon>
        <taxon>Dichelobacter</taxon>
    </lineage>
</organism>
<accession>A5EVB6</accession>
<feature type="chain" id="PRO_0000316667" description="Putative phosphoenolpyruvate synthase regulatory protein">
    <location>
        <begin position="1"/>
        <end position="271"/>
    </location>
</feature>
<feature type="binding site" evidence="1">
    <location>
        <begin position="152"/>
        <end position="159"/>
    </location>
    <ligand>
        <name>ADP</name>
        <dbReference type="ChEBI" id="CHEBI:456216"/>
    </ligand>
</feature>
<comment type="function">
    <text evidence="1">Bifunctional serine/threonine kinase and phosphorylase involved in the regulation of the phosphoenolpyruvate synthase (PEPS) by catalyzing its phosphorylation/dephosphorylation.</text>
</comment>
<comment type="catalytic activity">
    <reaction evidence="1">
        <text>[pyruvate, water dikinase] + ADP = [pyruvate, water dikinase]-phosphate + AMP + H(+)</text>
        <dbReference type="Rhea" id="RHEA:46020"/>
        <dbReference type="Rhea" id="RHEA-COMP:11425"/>
        <dbReference type="Rhea" id="RHEA-COMP:11426"/>
        <dbReference type="ChEBI" id="CHEBI:15378"/>
        <dbReference type="ChEBI" id="CHEBI:43176"/>
        <dbReference type="ChEBI" id="CHEBI:68546"/>
        <dbReference type="ChEBI" id="CHEBI:456215"/>
        <dbReference type="ChEBI" id="CHEBI:456216"/>
        <dbReference type="EC" id="2.7.11.33"/>
    </reaction>
</comment>
<comment type="catalytic activity">
    <reaction evidence="1">
        <text>[pyruvate, water dikinase]-phosphate + phosphate + H(+) = [pyruvate, water dikinase] + diphosphate</text>
        <dbReference type="Rhea" id="RHEA:48580"/>
        <dbReference type="Rhea" id="RHEA-COMP:11425"/>
        <dbReference type="Rhea" id="RHEA-COMP:11426"/>
        <dbReference type="ChEBI" id="CHEBI:15378"/>
        <dbReference type="ChEBI" id="CHEBI:33019"/>
        <dbReference type="ChEBI" id="CHEBI:43176"/>
        <dbReference type="ChEBI" id="CHEBI:43474"/>
        <dbReference type="ChEBI" id="CHEBI:68546"/>
        <dbReference type="EC" id="2.7.4.28"/>
    </reaction>
</comment>
<comment type="similarity">
    <text evidence="1">Belongs to the pyruvate, phosphate/water dikinase regulatory protein family. PSRP subfamily.</text>
</comment>
<proteinExistence type="inferred from homology"/>
<sequence>MPRRTAFFISDRTGITVESMGDALLNQFEVNLKRENHPFIDSPEKAHQLVNIINATAEKSALRPLVFSSIVDEEIRNIVKSSAGLHLSFFDAFLGTLEKELGVSALQFSPRINSIINTERYDARMESLNFTLNHDDGSSDRNLQHAEVILIGVSRSGKTPTCLYLALQYGIRAANYPLTPEDLQSPNLPNMVKPFRNKLFGLTIDPERLSKIRQERRPNSEYADILTCKREVSDAKAMFYRFNLPYANTTHKSVEELAVHIMQTCHLKRRY</sequence>
<gene>
    <name type="ordered locus">DNO_0628</name>
</gene>
<name>PSRP_DICNV</name>
<keyword id="KW-0418">Kinase</keyword>
<keyword id="KW-0547">Nucleotide-binding</keyword>
<keyword id="KW-1185">Reference proteome</keyword>
<keyword id="KW-0723">Serine/threonine-protein kinase</keyword>
<keyword id="KW-0808">Transferase</keyword>